<feature type="chain" id="PRO_0000287261" description="RNA-directed RNA polymerase L">
    <location>
        <begin position="1"/>
        <end position="2095"/>
    </location>
</feature>
<feature type="domain" description="RdRp catalytic" evidence="4">
    <location>
        <begin position="587"/>
        <end position="773"/>
    </location>
</feature>
<feature type="domain" description="Mononegavirus-type SAM-dependent 2'-O-MTase" evidence="5">
    <location>
        <begin position="1625"/>
        <end position="1822"/>
    </location>
</feature>
<feature type="binding site" evidence="3">
    <location>
        <begin position="1652"/>
        <end position="1661"/>
    </location>
    <ligand>
        <name>ATP</name>
        <dbReference type="ChEBI" id="CHEBI:30616"/>
    </ligand>
</feature>
<comment type="function">
    <text evidence="1">RNA-directed RNA polymerase that catalyzes the transcription of viral mRNAs, their capping and polyadenylation. The template is composed of the viral RNA tightly encapsidated by the nucleoprotein (N). The viral polymerase binds to the genomic RNA at the 3' leader promoter, and transcribes subsequently all viral mRNAs with a decreasing efficiency. The first gene is the most transcribed, and the last the least transcribed. The viral phosphoprotein acts as a processivity factor. Capping is concomitant with initiation of mRNA transcription. Indeed, a GDP polyribonucleotidyl transferase (PRNTase) adds the cap structure when the nascent RNA chain length has reached few nucleotides. Ribose 2'-O methylation of viral mRNA cap precedes and facilitates subsequent guanine-N-7 methylation, both activities being carried by the viral polymerase. Polyadenylation of mRNAs occur by a stuttering mechanism at a slipery stop site present at the end viral genes. After finishing transcription of a mRNA, the polymerase can resume transcription of the downstream gene.</text>
</comment>
<comment type="function">
    <text evidence="1">RNA-directed RNA polymerase that catalyzes the replication of viral genomic RNA. The template is composed of the viral RNA tightly encapsidated by the nucleoprotein (N). The replicase mode is dependent on intracellular N protein concentration. In this mode, the polymerase replicates the whole viral genome without recognizing transcriptional signals, and the replicated genome is not caped or polyadenylated.</text>
</comment>
<comment type="catalytic activity">
    <reaction evidence="4">
        <text>RNA(n) + a ribonucleoside 5'-triphosphate = RNA(n+1) + diphosphate</text>
        <dbReference type="Rhea" id="RHEA:21248"/>
        <dbReference type="Rhea" id="RHEA-COMP:14527"/>
        <dbReference type="Rhea" id="RHEA-COMP:17342"/>
        <dbReference type="ChEBI" id="CHEBI:33019"/>
        <dbReference type="ChEBI" id="CHEBI:61557"/>
        <dbReference type="ChEBI" id="CHEBI:140395"/>
        <dbReference type="EC" id="2.7.7.48"/>
    </reaction>
</comment>
<comment type="catalytic activity">
    <reaction evidence="1">
        <text>a 5'-end (5'-triphosphoguanosine)-adenylyl-adenylyl-cytidylyl-adenosine in mRNA + 2 S-adenosyl-L-methionine = a 5'-end (N(7)-methyl 5'-triphosphoguanosine)-(2'-O-methyladenylyl)-adenylyl-cytidylyl-adenosine in mRNA + 2 S-adenosyl-L-homocysteine + H(+)</text>
        <dbReference type="Rhea" id="RHEA:65376"/>
        <dbReference type="Rhea" id="RHEA-COMP:16797"/>
        <dbReference type="Rhea" id="RHEA-COMP:16798"/>
        <dbReference type="ChEBI" id="CHEBI:15378"/>
        <dbReference type="ChEBI" id="CHEBI:57856"/>
        <dbReference type="ChEBI" id="CHEBI:59789"/>
        <dbReference type="ChEBI" id="CHEBI:156483"/>
        <dbReference type="ChEBI" id="CHEBI:156484"/>
        <dbReference type="EC" id="2.1.1.375"/>
    </reaction>
</comment>
<comment type="catalytic activity">
    <reaction evidence="1">
        <text>a 5'-end (5'-triphosphoguanosine)-adenylyl-adenylyl-cytidylyl-adenosine in mRNA + S-adenosyl-L-methionine = a 5'-end (5'-triphosphoguanosine)-(2'-O-methyladenylyl)-adenylyl-cytidylyl-adenosine in mRNA + S-adenosyl-L-homocysteine + H(+)</text>
        <dbReference type="Rhea" id="RHEA:65380"/>
        <dbReference type="Rhea" id="RHEA-COMP:16797"/>
        <dbReference type="Rhea" id="RHEA-COMP:16801"/>
        <dbReference type="ChEBI" id="CHEBI:15378"/>
        <dbReference type="ChEBI" id="CHEBI:57856"/>
        <dbReference type="ChEBI" id="CHEBI:59789"/>
        <dbReference type="ChEBI" id="CHEBI:156482"/>
        <dbReference type="ChEBI" id="CHEBI:156484"/>
    </reaction>
</comment>
<comment type="catalytic activity">
    <reaction evidence="2">
        <text>a 5'-end triphospho-adenylyl-adenylyl-cytidylyl-adenosine in mRNA + GDP + H(+) = a 5'-end (5'-triphosphoguanosine)-adenylyl-adenylyl-cytidylyl-adenosine in mRNA + diphosphate</text>
        <dbReference type="Rhea" id="RHEA:65436"/>
        <dbReference type="Rhea" id="RHEA-COMP:16797"/>
        <dbReference type="Rhea" id="RHEA-COMP:16799"/>
        <dbReference type="ChEBI" id="CHEBI:15378"/>
        <dbReference type="ChEBI" id="CHEBI:33019"/>
        <dbReference type="ChEBI" id="CHEBI:58189"/>
        <dbReference type="ChEBI" id="CHEBI:156484"/>
        <dbReference type="ChEBI" id="CHEBI:156503"/>
        <dbReference type="EC" id="2.7.7.88"/>
    </reaction>
</comment>
<comment type="catalytic activity">
    <reaction evidence="1">
        <text>a 5'-end (5'-triphosphoguanosine)-(2'-O-methyladenylyl)-adenylyl-cytidylyl-adenosine in mRNA + S-adenosyl-L-methionine = a 5'-end (N(7)-methyl 5'-triphosphoguanosine)-(2'-O-methyladenylyl)-adenylyl-cytidylyl-adenosine in mRNA + S-adenosyl-L-homocysteine</text>
        <dbReference type="Rhea" id="RHEA:65440"/>
        <dbReference type="Rhea" id="RHEA-COMP:16798"/>
        <dbReference type="Rhea" id="RHEA-COMP:16801"/>
        <dbReference type="ChEBI" id="CHEBI:57856"/>
        <dbReference type="ChEBI" id="CHEBI:59789"/>
        <dbReference type="ChEBI" id="CHEBI:156482"/>
        <dbReference type="ChEBI" id="CHEBI:156483"/>
    </reaction>
</comment>
<comment type="catalytic activity">
    <reaction evidence="2">
        <text>GTP + H2O = GDP + phosphate + H(+)</text>
        <dbReference type="Rhea" id="RHEA:19669"/>
        <dbReference type="ChEBI" id="CHEBI:15377"/>
        <dbReference type="ChEBI" id="CHEBI:15378"/>
        <dbReference type="ChEBI" id="CHEBI:37565"/>
        <dbReference type="ChEBI" id="CHEBI:43474"/>
        <dbReference type="ChEBI" id="CHEBI:58189"/>
    </reaction>
</comment>
<comment type="subunit">
    <text evidence="1">May form homodimer. Interacts with the P protein.</text>
</comment>
<comment type="subcellular location">
    <subcellularLocation>
        <location evidence="1">Virion</location>
    </subcellularLocation>
    <subcellularLocation>
        <location evidence="1">Host cytoplasm</location>
    </subcellularLocation>
    <text evidence="1">L and P are packaged asymmetrically towards the blunt end of the virus.</text>
</comment>
<comment type="similarity">
    <text evidence="6">Belongs to the rhabdoviridae protein L family.</text>
</comment>
<keyword id="KW-0002">3D-structure</keyword>
<keyword id="KW-0067">ATP-binding</keyword>
<keyword id="KW-1035">Host cytoplasm</keyword>
<keyword id="KW-0378">Hydrolase</keyword>
<keyword id="KW-0489">Methyltransferase</keyword>
<keyword id="KW-0506">mRNA capping</keyword>
<keyword id="KW-0507">mRNA processing</keyword>
<keyword id="KW-0511">Multifunctional enzyme</keyword>
<keyword id="KW-0547">Nucleotide-binding</keyword>
<keyword id="KW-0548">Nucleotidyltransferase</keyword>
<keyword id="KW-1185">Reference proteome</keyword>
<keyword id="KW-0696">RNA-directed RNA polymerase</keyword>
<keyword id="KW-0949">S-adenosyl-L-methionine</keyword>
<keyword id="KW-0808">Transferase</keyword>
<keyword id="KW-0693">Viral RNA replication</keyword>
<keyword id="KW-1195">Viral transcription</keyword>
<keyword id="KW-0946">Virion</keyword>
<accession>Q91DR9</accession>
<organism>
    <name type="scientific">Spring viremia of carp virus</name>
    <name type="common">Rhabdovirus carpia</name>
    <dbReference type="NCBI Taxonomy" id="696863"/>
    <lineage>
        <taxon>Viruses</taxon>
        <taxon>Riboviria</taxon>
        <taxon>Orthornavirae</taxon>
        <taxon>Negarnaviricota</taxon>
        <taxon>Haploviricotina</taxon>
        <taxon>Monjiviricetes</taxon>
        <taxon>Mononegavirales</taxon>
        <taxon>Rhabdoviridae</taxon>
        <taxon>Alpharhabdovirinae</taxon>
        <taxon>Sprivivirus</taxon>
    </lineage>
</organism>
<protein>
    <recommendedName>
        <fullName>RNA-directed RNA polymerase L</fullName>
        <shortName>Protein L</shortName>
    </recommendedName>
    <alternativeName>
        <fullName>Large structural protein</fullName>
    </alternativeName>
    <alternativeName>
        <fullName>Replicase</fullName>
    </alternativeName>
    <alternativeName>
        <fullName>Transcriptase</fullName>
    </alternativeName>
    <domain>
        <recommendedName>
            <fullName>RNA-directed RNA polymerase</fullName>
            <ecNumber evidence="2">2.7.7.48</ecNumber>
        </recommendedName>
    </domain>
    <domain>
        <recommendedName>
            <fullName evidence="1">GTP phosphohydrolase</fullName>
            <ecNumber evidence="1">3.6.1.-</ecNumber>
        </recommendedName>
    </domain>
    <domain>
        <recommendedName>
            <fullName evidence="6">GDP polyribonucleotidyltransferase</fullName>
            <ecNumber evidence="1">2.7.7.88</ecNumber>
        </recommendedName>
        <alternativeName>
            <fullName evidence="6">PRNTase</fullName>
        </alternativeName>
    </domain>
    <domain>
        <recommendedName>
            <fullName evidence="6">mRNA cap methyltransferase</fullName>
            <ecNumber evidence="1">2.1.1.375</ecNumber>
        </recommendedName>
        <alternativeName>
            <fullName evidence="1">mRNA (guanine-N(7)-)-methyltransferase</fullName>
            <shortName evidence="1">G-N7-MTase</shortName>
        </alternativeName>
        <alternativeName>
            <fullName evidence="1">mRNA (nucleoside-2'-O-)-methyltransferase</fullName>
            <shortName evidence="1">N1-2'-O-MTase</shortName>
        </alternativeName>
    </domain>
</protein>
<sequence>MFEWESQDTPSGLPDEESYFPTSKLSVEERMHYLNNVDYNLNSPLISDDIEYLTLKHFGRAIPSLWKVKNWEIPLEMLKGVGIIKTWDQIHPWMGKWFDSEHNCPQGESFLRTVQAESELTSEIPVTFIKGWIGKEIKFPVKRGHHAVHLLMQKVLDLHKLTLLINSVDSGETEKLCESFGLNSKQSKFETYSLGTVRYCPGWIFIDKAEILLDRNFLLMMKDTLIGRLQTLLSMLGNCEMEVEQIYTHTETMLSLYSYGDQIIEKAGNNGYSKIKLLEPICNLRLSELAHKYRPLVPDFPHFQEHVETSVREEDTTDGLLSAILSLVNNTEDIQLILTIYGSFRHWGHPFISYFEGLQKLHDQVTLPKQIDKEYAAALASDLAYTVLQRKFSEEKKWYVDSIALSSKHPLKEHVDNGTWPTAAQIQDFGDRWHLLPLTKCFEVPDLLDPSVIYSDKSHSMNRKEVIDHVISTPNKPIPSKKVLETMINNPATDWPTFLKAVDEEGLPRDNLIIGLKGKERELKIAGRFFSLMSWQLREYFVITEYLIKTHYVPLFKGLTMADDLTSVVKKMLDNTNGQGLDDYSSICIANHIDYEKWNNHQRKESNGPVFRVMGQFLGYPRLFERTHEFFESSLIYYNGRPDLMDVRGDSLVNTTDKMVCWEGQAGGLEGLRQKGWSVLNLLVINRESSIRNTVVKVLAQGDNQVICTQYKTKNYKNEDELKMLLTAMVENNQTIMNGIITGTGKLGLIINNDETMQSADYLNYGKVPVFRGILRGLETKRWSRVTCITNDQIPTLAGVMSSVSTNALTVAHFAASPINAILQYHYFANFCLMMIAMHNPAIRSSMYTKMFRKCHIMSKEFKAATLYLDPSLGGVCGISLARFLIRSFPDPVTEGLAFWKMIHHNCQSDWLKALSKRCGNPKLARFRPEHIPKIIEDPAALNISMGMSASNLLKTEVKGHLIRTADTIQNQIIREAAEYLGQEEASLNEFLWDIEPFFPRFLSEFRSSTFVGVTDSLIGLFQNSKTIRGLFKSYYKRELDRLVVKSELSSLEHLGSYRKETPDSIWECSSTQADLLREKSWGRSVIGMTVPHPLEMFGKGHQKELECIPCQTSGLTYISSYCPRGINNWYSTVGSLAAYLGSKTSETTSILQPWEKDSKIPIIKRATKLRDSISWFVPPDSKLAKSIQQNLKALTGEDWEEDIQGFKRTGSALHRFTTSRVSNGGFSAQSPAKLTRIMTTTDTMRDLGDQNYDFMFQAGILYSQMTTGELRENSTNSTATHYHITCKSCLREIQEPMLESRIVYNPPSSSRVIKSWIPNATEIMEESKPIKLREVDWDPLTRYEKSYHIGRCQGFLYGDLTYQKTGRSEESSIFPLSIQYKVEGSGFMRGFCDGIIRASAVQALHRRVSSIVSTADVIYGGALYLTNQVGDSPPFQNLCRSGPLREELERIPHKMTSSYPTSNSDMGYLIRNYLKRSLKQLSRGRYETKEGPIWVFSDVRTKKFLGPFSLSTDALNCLYKNKLSKRDKNAVRNLSQLSSRMRSGDLSDEEIGKVEARFSFTPAEMRHACKFTIGKTQVPIVMSEWGQEAYGNITMYPVFYSTTKTEKPDWTFSRLQNPTISGLRISQQATGAHYKLRSLLKGMKIHYQDAIGCGDGSGGLSSCLLRENKHCRVIFNSLLELTGNTLRGSTPDPPSAINGIPQIRDRCVNLNNVWEHPSDLSHPDTWKYFGELKAQFNMDVDLIVMDMEVQDIDISRRIEQNLRDHVHSLLSRHGTVIYKTYMTIMSENEKSVLDIVGVLFEDVQLCQTQYSSSQTSEVYCVMRRLRQKVDSQHVDWQSLVRQGINSKVYCNLPLDKEFERALNLYQIDTLVGVPRGLIPNLAVELETLLEIGGLSGGILGKLVLNIEEGKLGFTMALIVSCILISESAICTTRLSNKREVPSSGACQRMAVCLIGAAILLSVHHRSIENHKGAIRMLRHSVPIRISSKLRKDGKLQSRWSSISREGLAKDVRLNSNMAGVGAWIRVWSRMKDRERRWEAREADSWLKTHNKGLSMEHVRRHTGVLDILHGTGDRLDRSVPTVSSAPRESGTWVE</sequence>
<organismHost>
    <name type="scientific">Cyprinus carpio</name>
    <name type="common">Common carp</name>
    <dbReference type="NCBI Taxonomy" id="7962"/>
</organismHost>
<name>L_SVCV</name>
<dbReference type="EC" id="2.7.7.48" evidence="2"/>
<dbReference type="EC" id="3.6.1.-" evidence="1"/>
<dbReference type="EC" id="2.7.7.88" evidence="1"/>
<dbReference type="EC" id="2.1.1.375" evidence="1"/>
<dbReference type="EMBL" id="AJ318079">
    <property type="protein sequence ID" value="CAC51337.1"/>
    <property type="molecule type" value="Genomic_RNA"/>
</dbReference>
<dbReference type="PDB" id="5H5Z">
    <property type="method" value="X-ray"/>
    <property type="resolution" value="1.74 A"/>
    <property type="chains" value="C=828-836"/>
</dbReference>
<dbReference type="PDB" id="5Y91">
    <property type="method" value="X-ray"/>
    <property type="resolution" value="1.90 A"/>
    <property type="chains" value="C=828-836"/>
</dbReference>
<dbReference type="PDB" id="6LBE">
    <property type="method" value="X-ray"/>
    <property type="resolution" value="2.60 A"/>
    <property type="chains" value="E/F=828-836"/>
</dbReference>
<dbReference type="PDBsum" id="5H5Z"/>
<dbReference type="PDBsum" id="5Y91"/>
<dbReference type="PDBsum" id="6LBE"/>
<dbReference type="SMR" id="Q91DR9"/>
<dbReference type="Proteomes" id="UP000007541">
    <property type="component" value="Genome"/>
</dbReference>
<dbReference type="GO" id="GO:0030430">
    <property type="term" value="C:host cell cytoplasm"/>
    <property type="evidence" value="ECO:0007669"/>
    <property type="project" value="UniProtKB-SubCell"/>
</dbReference>
<dbReference type="GO" id="GO:0044423">
    <property type="term" value="C:virion component"/>
    <property type="evidence" value="ECO:0007669"/>
    <property type="project" value="UniProtKB-KW"/>
</dbReference>
<dbReference type="GO" id="GO:0005524">
    <property type="term" value="F:ATP binding"/>
    <property type="evidence" value="ECO:0007669"/>
    <property type="project" value="UniProtKB-KW"/>
</dbReference>
<dbReference type="GO" id="GO:0003924">
    <property type="term" value="F:GTPase activity"/>
    <property type="evidence" value="ECO:0007669"/>
    <property type="project" value="RHEA"/>
</dbReference>
<dbReference type="GO" id="GO:0004482">
    <property type="term" value="F:mRNA 5'-cap (guanine-N7-)-methyltransferase activity"/>
    <property type="evidence" value="ECO:0007669"/>
    <property type="project" value="InterPro"/>
</dbReference>
<dbReference type="GO" id="GO:0003968">
    <property type="term" value="F:RNA-directed RNA polymerase activity"/>
    <property type="evidence" value="ECO:0007669"/>
    <property type="project" value="UniProtKB-KW"/>
</dbReference>
<dbReference type="GO" id="GO:0039689">
    <property type="term" value="P:negative stranded viral RNA replication"/>
    <property type="evidence" value="ECO:0000314"/>
    <property type="project" value="UniProtKB"/>
</dbReference>
<dbReference type="GO" id="GO:0019083">
    <property type="term" value="P:viral transcription"/>
    <property type="evidence" value="ECO:0007669"/>
    <property type="project" value="UniProtKB-KW"/>
</dbReference>
<dbReference type="FunFam" id="3.40.50.150:FF:000473">
    <property type="entry name" value="RNA-directed RNA polymerase L"/>
    <property type="match status" value="1"/>
</dbReference>
<dbReference type="Gene3D" id="3.40.50.150">
    <property type="entry name" value="Vaccinia Virus protein VP39"/>
    <property type="match status" value="1"/>
</dbReference>
<dbReference type="InterPro" id="IPR039530">
    <property type="entry name" value="L_methyltransferase_rhabdo"/>
</dbReference>
<dbReference type="InterPro" id="IPR039736">
    <property type="entry name" value="L_poly_C"/>
</dbReference>
<dbReference type="InterPro" id="IPR048397">
    <property type="entry name" value="Methyltrans_Mon_CD"/>
</dbReference>
<dbReference type="InterPro" id="IPR026890">
    <property type="entry name" value="Mononeg_mRNAcap"/>
</dbReference>
<dbReference type="InterPro" id="IPR014023">
    <property type="entry name" value="Mononeg_RNA_pol_cat"/>
</dbReference>
<dbReference type="InterPro" id="IPR025786">
    <property type="entry name" value="Mononega_L_MeTrfase"/>
</dbReference>
<dbReference type="InterPro" id="IPR017234">
    <property type="entry name" value="RNA-dir_pol_rhabdovirus"/>
</dbReference>
<dbReference type="InterPro" id="IPR029063">
    <property type="entry name" value="SAM-dependent_MTases_sf"/>
</dbReference>
<dbReference type="NCBIfam" id="TIGR04198">
    <property type="entry name" value="paramyx_RNAcap"/>
    <property type="match status" value="1"/>
</dbReference>
<dbReference type="Pfam" id="PF21080">
    <property type="entry name" value="Methyltrans_Mon_1st"/>
    <property type="match status" value="1"/>
</dbReference>
<dbReference type="Pfam" id="PF14314">
    <property type="entry name" value="Methyltrans_Mon_2nd"/>
    <property type="match status" value="1"/>
</dbReference>
<dbReference type="Pfam" id="PF14318">
    <property type="entry name" value="Mononeg_mRNAcap"/>
    <property type="match status" value="1"/>
</dbReference>
<dbReference type="Pfam" id="PF00946">
    <property type="entry name" value="Mononeg_RNA_pol"/>
    <property type="match status" value="1"/>
</dbReference>
<dbReference type="PIRSF" id="PIRSF037546">
    <property type="entry name" value="RNA_pol_RhabdoV_sub"/>
    <property type="match status" value="1"/>
</dbReference>
<dbReference type="PROSITE" id="PS50526">
    <property type="entry name" value="RDRP_SSRNA_NEG_NONSEG"/>
    <property type="match status" value="1"/>
</dbReference>
<dbReference type="PROSITE" id="PS51590">
    <property type="entry name" value="SAM_MT_MNV_L"/>
    <property type="match status" value="1"/>
</dbReference>
<gene>
    <name type="primary">L</name>
</gene>
<evidence type="ECO:0000250" key="1">
    <source>
        <dbReference type="UniProtKB" id="P03523"/>
    </source>
</evidence>
<evidence type="ECO:0000250" key="2">
    <source>
        <dbReference type="UniProtKB" id="P28887"/>
    </source>
</evidence>
<evidence type="ECO:0000255" key="3"/>
<evidence type="ECO:0000255" key="4">
    <source>
        <dbReference type="PROSITE-ProRule" id="PRU00539"/>
    </source>
</evidence>
<evidence type="ECO:0000255" key="5">
    <source>
        <dbReference type="PROSITE-ProRule" id="PRU00923"/>
    </source>
</evidence>
<evidence type="ECO:0000305" key="6"/>
<reference key="1">
    <citation type="journal article" date="2002" name="Virus Res.">
        <title>Determination of the complete genomic sequence and analysis of the gene products of the virus of Spring Viremia of Carp, a fish rhabdovirus.</title>
        <authorList>
            <person name="Hoffmann B."/>
            <person name="Schutze H."/>
            <person name="Mettenleiter T.C."/>
        </authorList>
    </citation>
    <scope>NUCLEOTIDE SEQUENCE [GENOMIC RNA]</scope>
    <source>
        <strain>Fijan reference</strain>
    </source>
</reference>
<proteinExistence type="evidence at protein level"/>